<protein>
    <recommendedName>
        <fullName evidence="1">Glutathione-regulated potassium-efflux system ancillary protein KefG</fullName>
    </recommendedName>
    <alternativeName>
        <fullName evidence="1">Putative quinone oxidoreductase KefG</fullName>
        <ecNumber evidence="1">1.6.5.2</ecNumber>
    </alternativeName>
</protein>
<dbReference type="EC" id="1.6.5.2" evidence="1"/>
<dbReference type="EMBL" id="FM180568">
    <property type="protein sequence ID" value="CAS11149.1"/>
    <property type="molecule type" value="Genomic_DNA"/>
</dbReference>
<dbReference type="SMR" id="B7UK62"/>
<dbReference type="KEGG" id="ecg:E2348C_3601"/>
<dbReference type="HOGENOM" id="CLU_058643_0_1_6"/>
<dbReference type="Proteomes" id="UP000008205">
    <property type="component" value="Chromosome"/>
</dbReference>
<dbReference type="GO" id="GO:0005886">
    <property type="term" value="C:plasma membrane"/>
    <property type="evidence" value="ECO:0007669"/>
    <property type="project" value="UniProtKB-SubCell"/>
</dbReference>
<dbReference type="GO" id="GO:0009055">
    <property type="term" value="F:electron transfer activity"/>
    <property type="evidence" value="ECO:0007669"/>
    <property type="project" value="TreeGrafter"/>
</dbReference>
<dbReference type="GO" id="GO:0010181">
    <property type="term" value="F:FMN binding"/>
    <property type="evidence" value="ECO:0007669"/>
    <property type="project" value="TreeGrafter"/>
</dbReference>
<dbReference type="GO" id="GO:0050136">
    <property type="term" value="F:NADH:ubiquinone reductase (non-electrogenic) activity"/>
    <property type="evidence" value="ECO:0007669"/>
    <property type="project" value="RHEA"/>
</dbReference>
<dbReference type="GO" id="GO:0008753">
    <property type="term" value="F:NADPH dehydrogenase (quinone) activity"/>
    <property type="evidence" value="ECO:0007669"/>
    <property type="project" value="RHEA"/>
</dbReference>
<dbReference type="GO" id="GO:1901381">
    <property type="term" value="P:positive regulation of potassium ion transmembrane transport"/>
    <property type="evidence" value="ECO:0007669"/>
    <property type="project" value="UniProtKB-UniRule"/>
</dbReference>
<dbReference type="GO" id="GO:0006813">
    <property type="term" value="P:potassium ion transport"/>
    <property type="evidence" value="ECO:0007669"/>
    <property type="project" value="InterPro"/>
</dbReference>
<dbReference type="FunFam" id="3.40.50.360:FF:000013">
    <property type="entry name" value="Glutathione-regulated potassium-efflux system ancillary protein KefG"/>
    <property type="match status" value="1"/>
</dbReference>
<dbReference type="Gene3D" id="3.40.50.360">
    <property type="match status" value="1"/>
</dbReference>
<dbReference type="HAMAP" id="MF_01415">
    <property type="entry name" value="K_H_efflux_KefG"/>
    <property type="match status" value="1"/>
</dbReference>
<dbReference type="InterPro" id="IPR003680">
    <property type="entry name" value="Flavodoxin_fold"/>
</dbReference>
<dbReference type="InterPro" id="IPR029039">
    <property type="entry name" value="Flavoprotein-like_sf"/>
</dbReference>
<dbReference type="InterPro" id="IPR023947">
    <property type="entry name" value="K_H_efflux_KefG"/>
</dbReference>
<dbReference type="InterPro" id="IPR046980">
    <property type="entry name" value="KefG/KefF"/>
</dbReference>
<dbReference type="NCBIfam" id="NF003430">
    <property type="entry name" value="PRK04930.1"/>
    <property type="match status" value="1"/>
</dbReference>
<dbReference type="PANTHER" id="PTHR47307">
    <property type="entry name" value="GLUTATHIONE-REGULATED POTASSIUM-EFFLUX SYSTEM ANCILLARY PROTEIN KEFG"/>
    <property type="match status" value="1"/>
</dbReference>
<dbReference type="PANTHER" id="PTHR47307:SF1">
    <property type="entry name" value="GLUTATHIONE-REGULATED POTASSIUM-EFFLUX SYSTEM ANCILLARY PROTEIN KEFG"/>
    <property type="match status" value="1"/>
</dbReference>
<dbReference type="Pfam" id="PF02525">
    <property type="entry name" value="Flavodoxin_2"/>
    <property type="match status" value="1"/>
</dbReference>
<dbReference type="SUPFAM" id="SSF52218">
    <property type="entry name" value="Flavoproteins"/>
    <property type="match status" value="1"/>
</dbReference>
<reference key="1">
    <citation type="journal article" date="2009" name="J. Bacteriol.">
        <title>Complete genome sequence and comparative genome analysis of enteropathogenic Escherichia coli O127:H6 strain E2348/69.</title>
        <authorList>
            <person name="Iguchi A."/>
            <person name="Thomson N.R."/>
            <person name="Ogura Y."/>
            <person name="Saunders D."/>
            <person name="Ooka T."/>
            <person name="Henderson I.R."/>
            <person name="Harris D."/>
            <person name="Asadulghani M."/>
            <person name="Kurokawa K."/>
            <person name="Dean P."/>
            <person name="Kenny B."/>
            <person name="Quail M.A."/>
            <person name="Thurston S."/>
            <person name="Dougan G."/>
            <person name="Hayashi T."/>
            <person name="Parkhill J."/>
            <person name="Frankel G."/>
        </authorList>
    </citation>
    <scope>NUCLEOTIDE SEQUENCE [LARGE SCALE GENOMIC DNA]</scope>
    <source>
        <strain>E2348/69 / EPEC</strain>
    </source>
</reference>
<organism>
    <name type="scientific">Escherichia coli O127:H6 (strain E2348/69 / EPEC)</name>
    <dbReference type="NCBI Taxonomy" id="574521"/>
    <lineage>
        <taxon>Bacteria</taxon>
        <taxon>Pseudomonadati</taxon>
        <taxon>Pseudomonadota</taxon>
        <taxon>Gammaproteobacteria</taxon>
        <taxon>Enterobacterales</taxon>
        <taxon>Enterobacteriaceae</taxon>
        <taxon>Escherichia</taxon>
    </lineage>
</organism>
<evidence type="ECO:0000255" key="1">
    <source>
        <dbReference type="HAMAP-Rule" id="MF_01415"/>
    </source>
</evidence>
<keyword id="KW-0997">Cell inner membrane</keyword>
<keyword id="KW-1003">Cell membrane</keyword>
<keyword id="KW-0472">Membrane</keyword>
<keyword id="KW-0520">NAD</keyword>
<keyword id="KW-0560">Oxidoreductase</keyword>
<keyword id="KW-1185">Reference proteome</keyword>
<accession>B7UK62</accession>
<feature type="chain" id="PRO_1000184623" description="Glutathione-regulated potassium-efflux system ancillary protein KefG">
    <location>
        <begin position="1"/>
        <end position="184"/>
    </location>
</feature>
<sequence>MMSQPAKVLLLYAHPESQDSVANRVLLKPATQLSNVTVHDLYAHYPDFFIDIPREQALLREHEVIVFQHPLYTYSCPALLKEWLDRVLSRGFASGPGGNQLAGKYWRSVITTGEPESAYRYDALNRYPMSDVLRPFELAAGMCRMHWLSPIIIYWARRQSAQELASHARAYGDWLANPLSPGGC</sequence>
<comment type="function">
    <text evidence="1">Regulatory subunit of a potassium efflux system that confers protection against electrophiles. Required for full activity of KefB.</text>
</comment>
<comment type="catalytic activity">
    <reaction evidence="1">
        <text>a quinone + NADH + H(+) = a quinol + NAD(+)</text>
        <dbReference type="Rhea" id="RHEA:46160"/>
        <dbReference type="ChEBI" id="CHEBI:15378"/>
        <dbReference type="ChEBI" id="CHEBI:24646"/>
        <dbReference type="ChEBI" id="CHEBI:57540"/>
        <dbReference type="ChEBI" id="CHEBI:57945"/>
        <dbReference type="ChEBI" id="CHEBI:132124"/>
        <dbReference type="EC" id="1.6.5.2"/>
    </reaction>
</comment>
<comment type="catalytic activity">
    <reaction evidence="1">
        <text>a quinone + NADPH + H(+) = a quinol + NADP(+)</text>
        <dbReference type="Rhea" id="RHEA:46164"/>
        <dbReference type="ChEBI" id="CHEBI:15378"/>
        <dbReference type="ChEBI" id="CHEBI:24646"/>
        <dbReference type="ChEBI" id="CHEBI:57783"/>
        <dbReference type="ChEBI" id="CHEBI:58349"/>
        <dbReference type="ChEBI" id="CHEBI:132124"/>
        <dbReference type="EC" id="1.6.5.2"/>
    </reaction>
</comment>
<comment type="subunit">
    <text evidence="1">Interacts with KefB.</text>
</comment>
<comment type="subcellular location">
    <subcellularLocation>
        <location evidence="1">Cell inner membrane</location>
        <topology evidence="1">Peripheral membrane protein</topology>
        <orientation evidence="1">Cytoplasmic side</orientation>
    </subcellularLocation>
</comment>
<comment type="similarity">
    <text evidence="1">Belongs to the NAD(P)H dehydrogenase (quinone) family. KefG subfamily.</text>
</comment>
<proteinExistence type="inferred from homology"/>
<gene>
    <name evidence="1" type="primary">kefG</name>
    <name type="ordered locus">E2348C_3601</name>
</gene>
<name>KEFG_ECO27</name>